<dbReference type="EC" id="5.6.1.7" evidence="1"/>
<dbReference type="EMBL" id="CP000608">
    <property type="protein sequence ID" value="ABO46226.1"/>
    <property type="molecule type" value="Genomic_DNA"/>
</dbReference>
<dbReference type="RefSeq" id="WP_003024881.1">
    <property type="nucleotide sequence ID" value="NC_009257.1"/>
</dbReference>
<dbReference type="SMR" id="A4IWC4"/>
<dbReference type="KEGG" id="ftw:FTW_0264"/>
<dbReference type="HOGENOM" id="CLU_016503_3_0_6"/>
<dbReference type="GO" id="GO:0005737">
    <property type="term" value="C:cytoplasm"/>
    <property type="evidence" value="ECO:0007669"/>
    <property type="project" value="UniProtKB-SubCell"/>
</dbReference>
<dbReference type="GO" id="GO:0005524">
    <property type="term" value="F:ATP binding"/>
    <property type="evidence" value="ECO:0007669"/>
    <property type="project" value="UniProtKB-UniRule"/>
</dbReference>
<dbReference type="GO" id="GO:0140662">
    <property type="term" value="F:ATP-dependent protein folding chaperone"/>
    <property type="evidence" value="ECO:0007669"/>
    <property type="project" value="InterPro"/>
</dbReference>
<dbReference type="GO" id="GO:0016853">
    <property type="term" value="F:isomerase activity"/>
    <property type="evidence" value="ECO:0007669"/>
    <property type="project" value="UniProtKB-KW"/>
</dbReference>
<dbReference type="GO" id="GO:0051082">
    <property type="term" value="F:unfolded protein binding"/>
    <property type="evidence" value="ECO:0007669"/>
    <property type="project" value="UniProtKB-UniRule"/>
</dbReference>
<dbReference type="GO" id="GO:0042026">
    <property type="term" value="P:protein refolding"/>
    <property type="evidence" value="ECO:0007669"/>
    <property type="project" value="UniProtKB-UniRule"/>
</dbReference>
<dbReference type="CDD" id="cd03344">
    <property type="entry name" value="GroEL"/>
    <property type="match status" value="1"/>
</dbReference>
<dbReference type="FunFam" id="1.10.560.10:FF:000001">
    <property type="entry name" value="60 kDa chaperonin"/>
    <property type="match status" value="1"/>
</dbReference>
<dbReference type="FunFam" id="3.50.7.10:FF:000001">
    <property type="entry name" value="60 kDa chaperonin"/>
    <property type="match status" value="1"/>
</dbReference>
<dbReference type="Gene3D" id="3.50.7.10">
    <property type="entry name" value="GroEL"/>
    <property type="match status" value="1"/>
</dbReference>
<dbReference type="Gene3D" id="1.10.560.10">
    <property type="entry name" value="GroEL-like equatorial domain"/>
    <property type="match status" value="1"/>
</dbReference>
<dbReference type="Gene3D" id="3.30.260.10">
    <property type="entry name" value="TCP-1-like chaperonin intermediate domain"/>
    <property type="match status" value="1"/>
</dbReference>
<dbReference type="HAMAP" id="MF_00600">
    <property type="entry name" value="CH60"/>
    <property type="match status" value="1"/>
</dbReference>
<dbReference type="InterPro" id="IPR018370">
    <property type="entry name" value="Chaperonin_Cpn60_CS"/>
</dbReference>
<dbReference type="InterPro" id="IPR001844">
    <property type="entry name" value="Cpn60/GroEL"/>
</dbReference>
<dbReference type="InterPro" id="IPR002423">
    <property type="entry name" value="Cpn60/GroEL/TCP-1"/>
</dbReference>
<dbReference type="InterPro" id="IPR027409">
    <property type="entry name" value="GroEL-like_apical_dom_sf"/>
</dbReference>
<dbReference type="InterPro" id="IPR027413">
    <property type="entry name" value="GROEL-like_equatorial_sf"/>
</dbReference>
<dbReference type="InterPro" id="IPR027410">
    <property type="entry name" value="TCP-1-like_intermed_sf"/>
</dbReference>
<dbReference type="NCBIfam" id="TIGR02348">
    <property type="entry name" value="GroEL"/>
    <property type="match status" value="1"/>
</dbReference>
<dbReference type="NCBIfam" id="NF000592">
    <property type="entry name" value="PRK00013.1"/>
    <property type="match status" value="1"/>
</dbReference>
<dbReference type="NCBIfam" id="NF009487">
    <property type="entry name" value="PRK12849.1"/>
    <property type="match status" value="1"/>
</dbReference>
<dbReference type="NCBIfam" id="NF009488">
    <property type="entry name" value="PRK12850.1"/>
    <property type="match status" value="1"/>
</dbReference>
<dbReference type="NCBIfam" id="NF009489">
    <property type="entry name" value="PRK12851.1"/>
    <property type="match status" value="1"/>
</dbReference>
<dbReference type="PANTHER" id="PTHR45633">
    <property type="entry name" value="60 KDA HEAT SHOCK PROTEIN, MITOCHONDRIAL"/>
    <property type="match status" value="1"/>
</dbReference>
<dbReference type="Pfam" id="PF00118">
    <property type="entry name" value="Cpn60_TCP1"/>
    <property type="match status" value="1"/>
</dbReference>
<dbReference type="PRINTS" id="PR00298">
    <property type="entry name" value="CHAPERONIN60"/>
</dbReference>
<dbReference type="SUPFAM" id="SSF52029">
    <property type="entry name" value="GroEL apical domain-like"/>
    <property type="match status" value="1"/>
</dbReference>
<dbReference type="SUPFAM" id="SSF48592">
    <property type="entry name" value="GroEL equatorial domain-like"/>
    <property type="match status" value="1"/>
</dbReference>
<dbReference type="SUPFAM" id="SSF54849">
    <property type="entry name" value="GroEL-intermediate domain like"/>
    <property type="match status" value="1"/>
</dbReference>
<dbReference type="PROSITE" id="PS00296">
    <property type="entry name" value="CHAPERONINS_CPN60"/>
    <property type="match status" value="1"/>
</dbReference>
<name>CH60_FRATW</name>
<feature type="chain" id="PRO_1000025784" description="Chaperonin GroEL">
    <location>
        <begin position="1"/>
        <end position="544"/>
    </location>
</feature>
<feature type="binding site" evidence="1">
    <location>
        <begin position="30"/>
        <end position="33"/>
    </location>
    <ligand>
        <name>ATP</name>
        <dbReference type="ChEBI" id="CHEBI:30616"/>
    </ligand>
</feature>
<feature type="binding site" evidence="1">
    <location>
        <position position="51"/>
    </location>
    <ligand>
        <name>ATP</name>
        <dbReference type="ChEBI" id="CHEBI:30616"/>
    </ligand>
</feature>
<feature type="binding site" evidence="1">
    <location>
        <begin position="87"/>
        <end position="91"/>
    </location>
    <ligand>
        <name>ATP</name>
        <dbReference type="ChEBI" id="CHEBI:30616"/>
    </ligand>
</feature>
<feature type="binding site" evidence="1">
    <location>
        <position position="415"/>
    </location>
    <ligand>
        <name>ATP</name>
        <dbReference type="ChEBI" id="CHEBI:30616"/>
    </ligand>
</feature>
<feature type="binding site" evidence="1">
    <location>
        <begin position="479"/>
        <end position="481"/>
    </location>
    <ligand>
        <name>ATP</name>
        <dbReference type="ChEBI" id="CHEBI:30616"/>
    </ligand>
</feature>
<feature type="binding site" evidence="1">
    <location>
        <position position="495"/>
    </location>
    <ligand>
        <name>ATP</name>
        <dbReference type="ChEBI" id="CHEBI:30616"/>
    </ligand>
</feature>
<accession>A4IWC4</accession>
<sequence length="544" mass="57340">MAAKQVLFSDEARAKMLDGVNTLANAVKVTLGPKGRNVVLDKSFGAPTITKDGVSVAKEIELEDKFENMGAQIVKEVASKTADVAGDGTTTATVLAQALLTEGLKAVAAGMNPMDLKRGIDKATARLVEELKALSKPCSDPKSIEQVGTISANSDATVGKLIADAMAKVGKEGVITVEEGKGFEDELDVVEGMQFDRGYLSPYFATNQENMTTDLENPYILIVDKKISNIRDLLPILEGVSKSGRALLIIAEDVESEALATLVVNNMRGVVKVCAVKAPGFGDRRKAMLEDIATLTGATFVSEDLSMKLEETNMEHLGTASRVLVTKDNTTIIDGAGEKEAIAKRINVIKANIAEANSDYDREKLQERLAKLSGGVAVIKVGAVTEAEMKEKKDRVDDALHATRAAVEEGIVAGGGVALIRAQKALDGLTGENDDQNHGIALLRKAIEAPLRQIVSNAGGESSVVVNQVKANQGNYGYNAANDTYGDMVEMGILDPTKVTRSALQHAASIAGLMITTEAMIGEIKEAAPAMPMGGGMGGMPGMI</sequence>
<evidence type="ECO:0000255" key="1">
    <source>
        <dbReference type="HAMAP-Rule" id="MF_00600"/>
    </source>
</evidence>
<protein>
    <recommendedName>
        <fullName evidence="1">Chaperonin GroEL</fullName>
        <ecNumber evidence="1">5.6.1.7</ecNumber>
    </recommendedName>
    <alternativeName>
        <fullName evidence="1">60 kDa chaperonin</fullName>
    </alternativeName>
    <alternativeName>
        <fullName evidence="1">Chaperonin-60</fullName>
        <shortName evidence="1">Cpn60</shortName>
    </alternativeName>
</protein>
<organism>
    <name type="scientific">Francisella tularensis subsp. tularensis (strain WY96-3418)</name>
    <dbReference type="NCBI Taxonomy" id="418136"/>
    <lineage>
        <taxon>Bacteria</taxon>
        <taxon>Pseudomonadati</taxon>
        <taxon>Pseudomonadota</taxon>
        <taxon>Gammaproteobacteria</taxon>
        <taxon>Thiotrichales</taxon>
        <taxon>Francisellaceae</taxon>
        <taxon>Francisella</taxon>
    </lineage>
</organism>
<proteinExistence type="inferred from homology"/>
<gene>
    <name evidence="1" type="primary">groEL</name>
    <name evidence="1" type="synonym">groL</name>
    <name type="ordered locus">FTW_0264</name>
</gene>
<keyword id="KW-0067">ATP-binding</keyword>
<keyword id="KW-0143">Chaperone</keyword>
<keyword id="KW-0963">Cytoplasm</keyword>
<keyword id="KW-0413">Isomerase</keyword>
<keyword id="KW-0547">Nucleotide-binding</keyword>
<comment type="function">
    <text evidence="1">Together with its co-chaperonin GroES, plays an essential role in assisting protein folding. The GroEL-GroES system forms a nano-cage that allows encapsulation of the non-native substrate proteins and provides a physical environment optimized to promote and accelerate protein folding.</text>
</comment>
<comment type="catalytic activity">
    <reaction evidence="1">
        <text>ATP + H2O + a folded polypeptide = ADP + phosphate + an unfolded polypeptide.</text>
        <dbReference type="EC" id="5.6.1.7"/>
    </reaction>
</comment>
<comment type="subunit">
    <text evidence="1">Forms a cylinder of 14 subunits composed of two heptameric rings stacked back-to-back. Interacts with the co-chaperonin GroES.</text>
</comment>
<comment type="subcellular location">
    <subcellularLocation>
        <location evidence="1">Cytoplasm</location>
    </subcellularLocation>
</comment>
<comment type="similarity">
    <text evidence="1">Belongs to the chaperonin (HSP60) family.</text>
</comment>
<reference key="1">
    <citation type="journal article" date="2007" name="PLoS ONE">
        <title>Complete genomic characterization of a pathogenic A.II strain of Francisella tularensis subspecies tularensis.</title>
        <authorList>
            <person name="Beckstrom-Sternberg S.M."/>
            <person name="Auerbach R.K."/>
            <person name="Godbole S."/>
            <person name="Pearson J.V."/>
            <person name="Beckstrom-Sternberg J.S."/>
            <person name="Deng Z."/>
            <person name="Munk C."/>
            <person name="Kubota K."/>
            <person name="Zhou Y."/>
            <person name="Bruce D."/>
            <person name="Noronha J."/>
            <person name="Scheuermann R.H."/>
            <person name="Wang A."/>
            <person name="Wei X."/>
            <person name="Wang J."/>
            <person name="Hao J."/>
            <person name="Wagner D.M."/>
            <person name="Brettin T.S."/>
            <person name="Brown N."/>
            <person name="Gilna P."/>
            <person name="Keim P.S."/>
        </authorList>
    </citation>
    <scope>NUCLEOTIDE SEQUENCE [LARGE SCALE GENOMIC DNA]</scope>
    <source>
        <strain>WY96-3418</strain>
    </source>
</reference>